<gene>
    <name evidence="1" type="primary">sufS</name>
    <name type="ordered locus">YPK_1851</name>
</gene>
<protein>
    <recommendedName>
        <fullName evidence="1">Cysteine desulfurase</fullName>
        <ecNumber evidence="1">2.8.1.7</ecNumber>
    </recommendedName>
    <alternativeName>
        <fullName evidence="1">Selenocysteine beta-lyase</fullName>
        <shortName evidence="1">SCL</shortName>
    </alternativeName>
    <alternativeName>
        <fullName evidence="1">Selenocysteine lyase</fullName>
        <ecNumber evidence="1">4.4.1.16</ecNumber>
    </alternativeName>
    <alternativeName>
        <fullName evidence="1">Selenocysteine reductase</fullName>
    </alternativeName>
</protein>
<dbReference type="EC" id="2.8.1.7" evidence="1"/>
<dbReference type="EC" id="4.4.1.16" evidence="1"/>
<dbReference type="EMBL" id="CP000950">
    <property type="protein sequence ID" value="ACA68142.1"/>
    <property type="molecule type" value="Genomic_DNA"/>
</dbReference>
<dbReference type="RefSeq" id="WP_002211805.1">
    <property type="nucleotide sequence ID" value="NZ_CP009792.1"/>
</dbReference>
<dbReference type="SMR" id="B1JJ48"/>
<dbReference type="GeneID" id="57976274"/>
<dbReference type="KEGG" id="ypy:YPK_1851"/>
<dbReference type="PATRIC" id="fig|502800.11.peg.2521"/>
<dbReference type="UniPathway" id="UPA00266"/>
<dbReference type="GO" id="GO:0005737">
    <property type="term" value="C:cytoplasm"/>
    <property type="evidence" value="ECO:0007669"/>
    <property type="project" value="UniProtKB-SubCell"/>
</dbReference>
<dbReference type="GO" id="GO:0031071">
    <property type="term" value="F:cysteine desulfurase activity"/>
    <property type="evidence" value="ECO:0007669"/>
    <property type="project" value="UniProtKB-UniRule"/>
</dbReference>
<dbReference type="GO" id="GO:0030170">
    <property type="term" value="F:pyridoxal phosphate binding"/>
    <property type="evidence" value="ECO:0007669"/>
    <property type="project" value="InterPro"/>
</dbReference>
<dbReference type="GO" id="GO:0009000">
    <property type="term" value="F:selenocysteine lyase activity"/>
    <property type="evidence" value="ECO:0007669"/>
    <property type="project" value="UniProtKB-UniRule"/>
</dbReference>
<dbReference type="GO" id="GO:0006534">
    <property type="term" value="P:cysteine metabolic process"/>
    <property type="evidence" value="ECO:0007669"/>
    <property type="project" value="InterPro"/>
</dbReference>
<dbReference type="CDD" id="cd06453">
    <property type="entry name" value="SufS_like"/>
    <property type="match status" value="1"/>
</dbReference>
<dbReference type="Gene3D" id="3.90.1150.10">
    <property type="entry name" value="Aspartate Aminotransferase, domain 1"/>
    <property type="match status" value="1"/>
</dbReference>
<dbReference type="Gene3D" id="3.40.640.10">
    <property type="entry name" value="Type I PLP-dependent aspartate aminotransferase-like (Major domain)"/>
    <property type="match status" value="1"/>
</dbReference>
<dbReference type="HAMAP" id="MF_01831">
    <property type="entry name" value="SufS_aminotrans_5"/>
    <property type="match status" value="1"/>
</dbReference>
<dbReference type="InterPro" id="IPR000192">
    <property type="entry name" value="Aminotrans_V_dom"/>
</dbReference>
<dbReference type="InterPro" id="IPR020578">
    <property type="entry name" value="Aminotrans_V_PyrdxlP_BS"/>
</dbReference>
<dbReference type="InterPro" id="IPR010970">
    <property type="entry name" value="Cys_dSase_SufS"/>
</dbReference>
<dbReference type="InterPro" id="IPR015424">
    <property type="entry name" value="PyrdxlP-dep_Trfase"/>
</dbReference>
<dbReference type="InterPro" id="IPR015421">
    <property type="entry name" value="PyrdxlP-dep_Trfase_major"/>
</dbReference>
<dbReference type="InterPro" id="IPR015422">
    <property type="entry name" value="PyrdxlP-dep_Trfase_small"/>
</dbReference>
<dbReference type="NCBIfam" id="NF006791">
    <property type="entry name" value="PRK09295.1"/>
    <property type="match status" value="1"/>
</dbReference>
<dbReference type="NCBIfam" id="TIGR01979">
    <property type="entry name" value="sufS"/>
    <property type="match status" value="1"/>
</dbReference>
<dbReference type="PANTHER" id="PTHR43586">
    <property type="entry name" value="CYSTEINE DESULFURASE"/>
    <property type="match status" value="1"/>
</dbReference>
<dbReference type="PANTHER" id="PTHR43586:SF25">
    <property type="entry name" value="CYSTEINE DESULFURASE"/>
    <property type="match status" value="1"/>
</dbReference>
<dbReference type="Pfam" id="PF00266">
    <property type="entry name" value="Aminotran_5"/>
    <property type="match status" value="1"/>
</dbReference>
<dbReference type="SUPFAM" id="SSF53383">
    <property type="entry name" value="PLP-dependent transferases"/>
    <property type="match status" value="1"/>
</dbReference>
<dbReference type="PROSITE" id="PS00595">
    <property type="entry name" value="AA_TRANSFER_CLASS_5"/>
    <property type="match status" value="1"/>
</dbReference>
<evidence type="ECO:0000255" key="1">
    <source>
        <dbReference type="HAMAP-Rule" id="MF_01831"/>
    </source>
</evidence>
<sequence>MNFPIERVRADFPLLSRQVNGQPLVYLDSAASAQKPQAVIDKELHFYRDGYAAVHRGIHSLSAEATQQMEAVRTQVADFIHAASAEEIIFVRGTTEAINLVANSYGRHFLAAGDSIIITEMEHHANIVPWQMLAQDLGVEIRVWPLTATGELEITALAALIDDTTRLLAVTQVSNVLGTVNPIKDIVAQAKAAGLVVLVDGAQAVMHQPVDVQALGCDFYVFSGHKLYGPSGIGILYGKSALLQQMPPWEGGGAMIKTVSLTQGTTFADAPWRFEAGSPNTAGIMGLGAAIDYVTELGLLPIQQYEQSLMHYALAQLSQIKSLTLYGPTERAGVIAFNLGQHHAYDVGSFLDQYGIAIRTGHHCAMPLMAFYQVPSMCRASLALYNTREDVDRLVAGLQRIEKLLG</sequence>
<comment type="function">
    <text evidence="1">Cysteine desulfurases mobilize the sulfur from L-cysteine to yield L-alanine, an essential step in sulfur metabolism for biosynthesis of a variety of sulfur-containing biomolecules. Component of the suf operon, which is activated and required under specific conditions such as oxidative stress and iron limitation. Acts as a potent selenocysteine lyase in vitro, that mobilizes selenium from L-selenocysteine. Selenocysteine lyase activity is however unsure in vivo.</text>
</comment>
<comment type="catalytic activity">
    <reaction evidence="1">
        <text>(sulfur carrier)-H + L-cysteine = (sulfur carrier)-SH + L-alanine</text>
        <dbReference type="Rhea" id="RHEA:43892"/>
        <dbReference type="Rhea" id="RHEA-COMP:14737"/>
        <dbReference type="Rhea" id="RHEA-COMP:14739"/>
        <dbReference type="ChEBI" id="CHEBI:29917"/>
        <dbReference type="ChEBI" id="CHEBI:35235"/>
        <dbReference type="ChEBI" id="CHEBI:57972"/>
        <dbReference type="ChEBI" id="CHEBI:64428"/>
        <dbReference type="EC" id="2.8.1.7"/>
    </reaction>
</comment>
<comment type="catalytic activity">
    <reaction evidence="1">
        <text>L-selenocysteine + AH2 = hydrogenselenide + L-alanine + A + H(+)</text>
        <dbReference type="Rhea" id="RHEA:11632"/>
        <dbReference type="ChEBI" id="CHEBI:13193"/>
        <dbReference type="ChEBI" id="CHEBI:15378"/>
        <dbReference type="ChEBI" id="CHEBI:17499"/>
        <dbReference type="ChEBI" id="CHEBI:29317"/>
        <dbReference type="ChEBI" id="CHEBI:57843"/>
        <dbReference type="ChEBI" id="CHEBI:57972"/>
        <dbReference type="EC" id="4.4.1.16"/>
    </reaction>
</comment>
<comment type="cofactor">
    <cofactor evidence="1">
        <name>pyridoxal 5'-phosphate</name>
        <dbReference type="ChEBI" id="CHEBI:597326"/>
    </cofactor>
</comment>
<comment type="pathway">
    <text evidence="1">Cofactor biosynthesis; iron-sulfur cluster biosynthesis.</text>
</comment>
<comment type="subunit">
    <text evidence="1">Homodimer. Interacts with SufE and the SufBCD complex composed of SufB, SufC and SufD. The interaction with SufE is required to mediate the direct transfer of the sulfur atom from the S-sulfanylcysteine.</text>
</comment>
<comment type="subcellular location">
    <subcellularLocation>
        <location evidence="1">Cytoplasm</location>
    </subcellularLocation>
</comment>
<comment type="similarity">
    <text evidence="1">Belongs to the class-V pyridoxal-phosphate-dependent aminotransferase family. Csd subfamily.</text>
</comment>
<proteinExistence type="inferred from homology"/>
<reference key="1">
    <citation type="submission" date="2008-02" db="EMBL/GenBank/DDBJ databases">
        <title>Complete sequence of Yersinia pseudotuberculosis YPIII.</title>
        <authorList>
            <consortium name="US DOE Joint Genome Institute"/>
            <person name="Copeland A."/>
            <person name="Lucas S."/>
            <person name="Lapidus A."/>
            <person name="Glavina del Rio T."/>
            <person name="Dalin E."/>
            <person name="Tice H."/>
            <person name="Bruce D."/>
            <person name="Goodwin L."/>
            <person name="Pitluck S."/>
            <person name="Munk A.C."/>
            <person name="Brettin T."/>
            <person name="Detter J.C."/>
            <person name="Han C."/>
            <person name="Tapia R."/>
            <person name="Schmutz J."/>
            <person name="Larimer F."/>
            <person name="Land M."/>
            <person name="Hauser L."/>
            <person name="Challacombe J.F."/>
            <person name="Green L."/>
            <person name="Lindler L.E."/>
            <person name="Nikolich M.P."/>
            <person name="Richardson P."/>
        </authorList>
    </citation>
    <scope>NUCLEOTIDE SEQUENCE [LARGE SCALE GENOMIC DNA]</scope>
    <source>
        <strain>YPIII</strain>
    </source>
</reference>
<keyword id="KW-0963">Cytoplasm</keyword>
<keyword id="KW-0456">Lyase</keyword>
<keyword id="KW-0663">Pyridoxal phosphate</keyword>
<keyword id="KW-0808">Transferase</keyword>
<name>SUFS_YERPY</name>
<organism>
    <name type="scientific">Yersinia pseudotuberculosis serotype O:3 (strain YPIII)</name>
    <dbReference type="NCBI Taxonomy" id="502800"/>
    <lineage>
        <taxon>Bacteria</taxon>
        <taxon>Pseudomonadati</taxon>
        <taxon>Pseudomonadota</taxon>
        <taxon>Gammaproteobacteria</taxon>
        <taxon>Enterobacterales</taxon>
        <taxon>Yersiniaceae</taxon>
        <taxon>Yersinia</taxon>
    </lineage>
</organism>
<accession>B1JJ48</accession>
<feature type="chain" id="PRO_1000188316" description="Cysteine desulfurase">
    <location>
        <begin position="1"/>
        <end position="406"/>
    </location>
</feature>
<feature type="active site" description="Cysteine persulfide intermediate" evidence="1">
    <location>
        <position position="364"/>
    </location>
</feature>
<feature type="modified residue" description="N6-(pyridoxal phosphate)lysine" evidence="1">
    <location>
        <position position="226"/>
    </location>
</feature>